<accession>Q5XA89</accession>
<sequence>MQNKIIIHGARAHNLKNIDVEIPRDKLVVVTGLSGSGKSSLAFDTIYAEGQRRYVESLSAYARQFLGNMEKPDVDSIDGLSPAISIDQKTTSKNPRSTVGTVTEINDYLRLLYARVGTPYCINGHGAITASSAEQIVEQVLALPERTRMQILAPIVRRKKGQHKTIFEKIQKDGYVRVRVDGDIFDVTEVPELSKSKMHNIEVVIDRLVNKDGIRSRLFDSVEAALRLGDGYLMIDTMDGNELLFSEHYSCPVCGFTVPELEPRLFSFNAPFGSCPTCDGLGIKLEVDLDLVVPDPSKSLKEGALAPWNPISSNYYPTMLEQAMASFGVDMDTPFEALTEEERDLVLYGSGDREFHFHYVNDFGGERNIDIPFEGVVTNVNRRYHETNSDYTRNVMRGYMNELTCATCHGYRLNDQALCVHVGGEEGPHIGQISELSIADHLQLLEELELTENESTIAKPIVKEIHDRLTFLNNVGLNYLTLSRAAGTLSGGESQRIRLATQIGSNLSGVLYILDEPSIGLHQRDNDRLIESLKKMRDLGNTLIVVEHDEDTMMQADWLIDVGPGAGEFGGEIIASGTPKQVAKNKKSITGQYLSGKKFIPVPLERRSGNGRFIEIKGAAQNNLQSLDVRFPLGKFIAVTGVSGSGKSTLVNSILKKAVAQKLNRNADKPGKYHSISGIEHIERLIDIDQSPIGRTPRSNPATYTGVFDDIRDLFARTNEAKIRGYKKGRFSFNVKGGRCEACSGDGIIKIEMHFLPDVYVPCEVCHGRRYNSETLEVHYKEKNIAEVLDMTVDDALVFFSAIPKIARKIQTIKDVGLGYVTLGQPATTLSGGEAQRMKLASELHKRSTGKSLYILDEPTTGLHTDDIARLLKVLERFVDDGNTVLVIEHNLDVIKSADHIIDLGPEGGVGGGQIVATGTPEEVAQVKESYTGHYLKVKLQQ</sequence>
<feature type="chain" id="PRO_0000093104" description="UvrABC system protein A">
    <location>
        <begin position="1"/>
        <end position="942"/>
    </location>
</feature>
<feature type="domain" description="ABC transporter 1" evidence="1">
    <location>
        <begin position="308"/>
        <end position="589"/>
    </location>
</feature>
<feature type="domain" description="ABC transporter 2" evidence="1">
    <location>
        <begin position="609"/>
        <end position="937"/>
    </location>
</feature>
<feature type="zinc finger region" description="C4-type" evidence="1">
    <location>
        <begin position="251"/>
        <end position="278"/>
    </location>
</feature>
<feature type="zinc finger region" description="C4-type" evidence="1">
    <location>
        <begin position="740"/>
        <end position="766"/>
    </location>
</feature>
<feature type="binding site" evidence="1">
    <location>
        <begin position="32"/>
        <end position="39"/>
    </location>
    <ligand>
        <name>ATP</name>
        <dbReference type="ChEBI" id="CHEBI:30616"/>
    </ligand>
</feature>
<feature type="binding site" evidence="1">
    <location>
        <begin position="641"/>
        <end position="648"/>
    </location>
    <ligand>
        <name>ATP</name>
        <dbReference type="ChEBI" id="CHEBI:30616"/>
    </ligand>
</feature>
<keyword id="KW-0067">ATP-binding</keyword>
<keyword id="KW-0963">Cytoplasm</keyword>
<keyword id="KW-0227">DNA damage</keyword>
<keyword id="KW-0228">DNA excision</keyword>
<keyword id="KW-0234">DNA repair</keyword>
<keyword id="KW-0238">DNA-binding</keyword>
<keyword id="KW-0267">Excision nuclease</keyword>
<keyword id="KW-0479">Metal-binding</keyword>
<keyword id="KW-0547">Nucleotide-binding</keyword>
<keyword id="KW-0677">Repeat</keyword>
<keyword id="KW-0742">SOS response</keyword>
<keyword id="KW-0862">Zinc</keyword>
<keyword id="KW-0863">Zinc-finger</keyword>
<proteinExistence type="inferred from homology"/>
<protein>
    <recommendedName>
        <fullName evidence="1">UvrABC system protein A</fullName>
        <shortName evidence="1">UvrA protein</shortName>
    </recommendedName>
    <alternativeName>
        <fullName evidence="1">Excinuclease ABC subunit A</fullName>
    </alternativeName>
</protein>
<name>UVRA_STRP6</name>
<evidence type="ECO:0000255" key="1">
    <source>
        <dbReference type="HAMAP-Rule" id="MF_00205"/>
    </source>
</evidence>
<evidence type="ECO:0000305" key="2"/>
<gene>
    <name evidence="1" type="primary">uvrA</name>
    <name type="ordered locus">M6_Spy1539</name>
</gene>
<dbReference type="EMBL" id="CP000003">
    <property type="protein sequence ID" value="AAT87674.1"/>
    <property type="status" value="ALT_INIT"/>
    <property type="molecule type" value="Genomic_DNA"/>
</dbReference>
<dbReference type="RefSeq" id="WP_023077881.1">
    <property type="nucleotide sequence ID" value="NC_006086.1"/>
</dbReference>
<dbReference type="SMR" id="Q5XA89"/>
<dbReference type="KEGG" id="spa:M6_Spy1539"/>
<dbReference type="HOGENOM" id="CLU_001370_0_2_9"/>
<dbReference type="Proteomes" id="UP000001167">
    <property type="component" value="Chromosome"/>
</dbReference>
<dbReference type="GO" id="GO:0005737">
    <property type="term" value="C:cytoplasm"/>
    <property type="evidence" value="ECO:0007669"/>
    <property type="project" value="UniProtKB-SubCell"/>
</dbReference>
<dbReference type="GO" id="GO:0009380">
    <property type="term" value="C:excinuclease repair complex"/>
    <property type="evidence" value="ECO:0007669"/>
    <property type="project" value="InterPro"/>
</dbReference>
<dbReference type="GO" id="GO:0005524">
    <property type="term" value="F:ATP binding"/>
    <property type="evidence" value="ECO:0007669"/>
    <property type="project" value="UniProtKB-UniRule"/>
</dbReference>
<dbReference type="GO" id="GO:0016887">
    <property type="term" value="F:ATP hydrolysis activity"/>
    <property type="evidence" value="ECO:0007669"/>
    <property type="project" value="InterPro"/>
</dbReference>
<dbReference type="GO" id="GO:0003677">
    <property type="term" value="F:DNA binding"/>
    <property type="evidence" value="ECO:0007669"/>
    <property type="project" value="UniProtKB-UniRule"/>
</dbReference>
<dbReference type="GO" id="GO:0009381">
    <property type="term" value="F:excinuclease ABC activity"/>
    <property type="evidence" value="ECO:0007669"/>
    <property type="project" value="UniProtKB-UniRule"/>
</dbReference>
<dbReference type="GO" id="GO:0008270">
    <property type="term" value="F:zinc ion binding"/>
    <property type="evidence" value="ECO:0007669"/>
    <property type="project" value="UniProtKB-UniRule"/>
</dbReference>
<dbReference type="GO" id="GO:0006289">
    <property type="term" value="P:nucleotide-excision repair"/>
    <property type="evidence" value="ECO:0007669"/>
    <property type="project" value="UniProtKB-UniRule"/>
</dbReference>
<dbReference type="GO" id="GO:0009432">
    <property type="term" value="P:SOS response"/>
    <property type="evidence" value="ECO:0007669"/>
    <property type="project" value="UniProtKB-UniRule"/>
</dbReference>
<dbReference type="CDD" id="cd03270">
    <property type="entry name" value="ABC_UvrA_I"/>
    <property type="match status" value="1"/>
</dbReference>
<dbReference type="CDD" id="cd03271">
    <property type="entry name" value="ABC_UvrA_II"/>
    <property type="match status" value="1"/>
</dbReference>
<dbReference type="FunFam" id="1.20.1580.10:FF:000002">
    <property type="entry name" value="UvrABC system protein A"/>
    <property type="match status" value="1"/>
</dbReference>
<dbReference type="FunFam" id="3.40.50.300:FF:000028">
    <property type="entry name" value="UvrABC system protein A"/>
    <property type="match status" value="1"/>
</dbReference>
<dbReference type="Gene3D" id="3.30.190.20">
    <property type="match status" value="1"/>
</dbReference>
<dbReference type="Gene3D" id="1.10.8.280">
    <property type="entry name" value="ABC transporter ATPase domain-like"/>
    <property type="match status" value="1"/>
</dbReference>
<dbReference type="Gene3D" id="1.20.1580.10">
    <property type="entry name" value="ABC transporter ATPase like domain"/>
    <property type="match status" value="3"/>
</dbReference>
<dbReference type="Gene3D" id="3.40.50.300">
    <property type="entry name" value="P-loop containing nucleotide triphosphate hydrolases"/>
    <property type="match status" value="3"/>
</dbReference>
<dbReference type="HAMAP" id="MF_00205">
    <property type="entry name" value="UvrA"/>
    <property type="match status" value="1"/>
</dbReference>
<dbReference type="InterPro" id="IPR003593">
    <property type="entry name" value="AAA+_ATPase"/>
</dbReference>
<dbReference type="InterPro" id="IPR003439">
    <property type="entry name" value="ABC_transporter-like_ATP-bd"/>
</dbReference>
<dbReference type="InterPro" id="IPR017871">
    <property type="entry name" value="ABC_transporter-like_CS"/>
</dbReference>
<dbReference type="InterPro" id="IPR027417">
    <property type="entry name" value="P-loop_NTPase"/>
</dbReference>
<dbReference type="InterPro" id="IPR004602">
    <property type="entry name" value="UvrA"/>
</dbReference>
<dbReference type="InterPro" id="IPR041552">
    <property type="entry name" value="UvrA_DNA-bd"/>
</dbReference>
<dbReference type="InterPro" id="IPR041102">
    <property type="entry name" value="UvrA_inter"/>
</dbReference>
<dbReference type="NCBIfam" id="NF001503">
    <property type="entry name" value="PRK00349.1"/>
    <property type="match status" value="1"/>
</dbReference>
<dbReference type="NCBIfam" id="TIGR00630">
    <property type="entry name" value="uvra"/>
    <property type="match status" value="1"/>
</dbReference>
<dbReference type="PANTHER" id="PTHR43152">
    <property type="entry name" value="UVRABC SYSTEM PROTEIN A"/>
    <property type="match status" value="1"/>
</dbReference>
<dbReference type="PANTHER" id="PTHR43152:SF3">
    <property type="entry name" value="UVRABC SYSTEM PROTEIN A"/>
    <property type="match status" value="1"/>
</dbReference>
<dbReference type="Pfam" id="PF17755">
    <property type="entry name" value="UvrA_DNA-bind"/>
    <property type="match status" value="1"/>
</dbReference>
<dbReference type="Pfam" id="PF17760">
    <property type="entry name" value="UvrA_inter"/>
    <property type="match status" value="1"/>
</dbReference>
<dbReference type="SMART" id="SM00382">
    <property type="entry name" value="AAA"/>
    <property type="match status" value="1"/>
</dbReference>
<dbReference type="SUPFAM" id="SSF52540">
    <property type="entry name" value="P-loop containing nucleoside triphosphate hydrolases"/>
    <property type="match status" value="2"/>
</dbReference>
<dbReference type="PROSITE" id="PS00211">
    <property type="entry name" value="ABC_TRANSPORTER_1"/>
    <property type="match status" value="2"/>
</dbReference>
<dbReference type="PROSITE" id="PS50893">
    <property type="entry name" value="ABC_TRANSPORTER_2"/>
    <property type="match status" value="2"/>
</dbReference>
<comment type="function">
    <text evidence="1">The UvrABC repair system catalyzes the recognition and processing of DNA lesions. UvrA is an ATPase and a DNA-binding protein. A damage recognition complex composed of 2 UvrA and 2 UvrB subunits scans DNA for abnormalities. When the presence of a lesion has been verified by UvrB, the UvrA molecules dissociate.</text>
</comment>
<comment type="subunit">
    <text evidence="1">Forms a heterotetramer with UvrB during the search for lesions.</text>
</comment>
<comment type="subcellular location">
    <subcellularLocation>
        <location evidence="1">Cytoplasm</location>
    </subcellularLocation>
</comment>
<comment type="similarity">
    <text evidence="1">Belongs to the ABC transporter superfamily. UvrA family.</text>
</comment>
<comment type="sequence caution" evidence="2">
    <conflict type="erroneous initiation">
        <sequence resource="EMBL-CDS" id="AAT87674"/>
    </conflict>
</comment>
<organism>
    <name type="scientific">Streptococcus pyogenes serotype M6 (strain ATCC BAA-946 / MGAS10394)</name>
    <dbReference type="NCBI Taxonomy" id="286636"/>
    <lineage>
        <taxon>Bacteria</taxon>
        <taxon>Bacillati</taxon>
        <taxon>Bacillota</taxon>
        <taxon>Bacilli</taxon>
        <taxon>Lactobacillales</taxon>
        <taxon>Streptococcaceae</taxon>
        <taxon>Streptococcus</taxon>
    </lineage>
</organism>
<reference key="1">
    <citation type="journal article" date="2004" name="J. Infect. Dis.">
        <title>Progress toward characterization of the group A Streptococcus metagenome: complete genome sequence of a macrolide-resistant serotype M6 strain.</title>
        <authorList>
            <person name="Banks D.J."/>
            <person name="Porcella S.F."/>
            <person name="Barbian K.D."/>
            <person name="Beres S.B."/>
            <person name="Philips L.E."/>
            <person name="Voyich J.M."/>
            <person name="DeLeo F.R."/>
            <person name="Martin J.M."/>
            <person name="Somerville G.A."/>
            <person name="Musser J.M."/>
        </authorList>
    </citation>
    <scope>NUCLEOTIDE SEQUENCE [LARGE SCALE GENOMIC DNA]</scope>
    <source>
        <strain>ATCC BAA-946 / MGAS10394</strain>
    </source>
</reference>